<accession>A0QDG8</accession>
<dbReference type="EMBL" id="CP000479">
    <property type="protein sequence ID" value="ABK68062.1"/>
    <property type="molecule type" value="Genomic_DNA"/>
</dbReference>
<dbReference type="RefSeq" id="WP_003875862.1">
    <property type="nucleotide sequence ID" value="NC_008595.1"/>
</dbReference>
<dbReference type="SMR" id="A0QDG8"/>
<dbReference type="GeneID" id="75269504"/>
<dbReference type="KEGG" id="mav:MAV_1729"/>
<dbReference type="HOGENOM" id="CLU_061463_3_0_11"/>
<dbReference type="Proteomes" id="UP000001574">
    <property type="component" value="Chromosome"/>
</dbReference>
<dbReference type="GO" id="GO:0005737">
    <property type="term" value="C:cytoplasm"/>
    <property type="evidence" value="ECO:0007669"/>
    <property type="project" value="UniProtKB-ARBA"/>
</dbReference>
<dbReference type="GO" id="GO:1990904">
    <property type="term" value="C:ribonucleoprotein complex"/>
    <property type="evidence" value="ECO:0007669"/>
    <property type="project" value="UniProtKB-KW"/>
</dbReference>
<dbReference type="GO" id="GO:0005840">
    <property type="term" value="C:ribosome"/>
    <property type="evidence" value="ECO:0007669"/>
    <property type="project" value="UniProtKB-KW"/>
</dbReference>
<dbReference type="GO" id="GO:0019843">
    <property type="term" value="F:rRNA binding"/>
    <property type="evidence" value="ECO:0007669"/>
    <property type="project" value="UniProtKB-UniRule"/>
</dbReference>
<dbReference type="GO" id="GO:0003735">
    <property type="term" value="F:structural constituent of ribosome"/>
    <property type="evidence" value="ECO:0007669"/>
    <property type="project" value="InterPro"/>
</dbReference>
<dbReference type="GO" id="GO:0006412">
    <property type="term" value="P:translation"/>
    <property type="evidence" value="ECO:0007669"/>
    <property type="project" value="UniProtKB-UniRule"/>
</dbReference>
<dbReference type="HAMAP" id="MF_01363">
    <property type="entry name" value="Ribosomal_bL21"/>
    <property type="match status" value="1"/>
</dbReference>
<dbReference type="InterPro" id="IPR028909">
    <property type="entry name" value="bL21-like"/>
</dbReference>
<dbReference type="InterPro" id="IPR036164">
    <property type="entry name" value="bL21-like_sf"/>
</dbReference>
<dbReference type="InterPro" id="IPR001787">
    <property type="entry name" value="Ribosomal_bL21"/>
</dbReference>
<dbReference type="InterPro" id="IPR018258">
    <property type="entry name" value="Ribosomal_bL21_CS"/>
</dbReference>
<dbReference type="NCBIfam" id="TIGR00061">
    <property type="entry name" value="L21"/>
    <property type="match status" value="1"/>
</dbReference>
<dbReference type="PANTHER" id="PTHR21349">
    <property type="entry name" value="50S RIBOSOMAL PROTEIN L21"/>
    <property type="match status" value="1"/>
</dbReference>
<dbReference type="PANTHER" id="PTHR21349:SF0">
    <property type="entry name" value="LARGE RIBOSOMAL SUBUNIT PROTEIN BL21M"/>
    <property type="match status" value="1"/>
</dbReference>
<dbReference type="Pfam" id="PF00829">
    <property type="entry name" value="Ribosomal_L21p"/>
    <property type="match status" value="1"/>
</dbReference>
<dbReference type="SUPFAM" id="SSF141091">
    <property type="entry name" value="L21p-like"/>
    <property type="match status" value="1"/>
</dbReference>
<dbReference type="PROSITE" id="PS01169">
    <property type="entry name" value="RIBOSOMAL_L21"/>
    <property type="match status" value="1"/>
</dbReference>
<feature type="chain" id="PRO_1000067856" description="Large ribosomal subunit protein bL21">
    <location>
        <begin position="1"/>
        <end position="103"/>
    </location>
</feature>
<organism>
    <name type="scientific">Mycobacterium avium (strain 104)</name>
    <dbReference type="NCBI Taxonomy" id="243243"/>
    <lineage>
        <taxon>Bacteria</taxon>
        <taxon>Bacillati</taxon>
        <taxon>Actinomycetota</taxon>
        <taxon>Actinomycetes</taxon>
        <taxon>Mycobacteriales</taxon>
        <taxon>Mycobacteriaceae</taxon>
        <taxon>Mycobacterium</taxon>
        <taxon>Mycobacterium avium complex (MAC)</taxon>
    </lineage>
</organism>
<comment type="function">
    <text evidence="1">This protein binds to 23S rRNA in the presence of protein L20.</text>
</comment>
<comment type="subunit">
    <text evidence="1">Part of the 50S ribosomal subunit. Contacts protein L20.</text>
</comment>
<comment type="similarity">
    <text evidence="1">Belongs to the bacterial ribosomal protein bL21 family.</text>
</comment>
<name>RL21_MYCA1</name>
<evidence type="ECO:0000255" key="1">
    <source>
        <dbReference type="HAMAP-Rule" id="MF_01363"/>
    </source>
</evidence>
<evidence type="ECO:0000305" key="2"/>
<reference key="1">
    <citation type="submission" date="2006-10" db="EMBL/GenBank/DDBJ databases">
        <authorList>
            <person name="Fleischmann R.D."/>
            <person name="Dodson R.J."/>
            <person name="Haft D.H."/>
            <person name="Merkel J.S."/>
            <person name="Nelson W.C."/>
            <person name="Fraser C.M."/>
        </authorList>
    </citation>
    <scope>NUCLEOTIDE SEQUENCE [LARGE SCALE GENOMIC DNA]</scope>
    <source>
        <strain>104</strain>
    </source>
</reference>
<proteinExistence type="inferred from homology"/>
<protein>
    <recommendedName>
        <fullName evidence="1">Large ribosomal subunit protein bL21</fullName>
    </recommendedName>
    <alternativeName>
        <fullName evidence="2">50S ribosomal protein L21</fullName>
    </alternativeName>
</protein>
<keyword id="KW-0687">Ribonucleoprotein</keyword>
<keyword id="KW-0689">Ribosomal protein</keyword>
<keyword id="KW-0694">RNA-binding</keyword>
<keyword id="KW-0699">rRNA-binding</keyword>
<sequence>MATYAIVKTGGKQYKVAVGDVVKVEKLDSEPGSNVSLPVALVVDGAKVTSDAAALAKVAVTGEVLEHTKGPKIRIHKFRNKTGYHKRQGHRQQLTVLKVTGIK</sequence>
<gene>
    <name evidence="1" type="primary">rplU</name>
    <name type="ordered locus">MAV_1729</name>
</gene>